<feature type="chain" id="PRO_0000129036" description="Hydrogenase maturation factor HypA">
    <location>
        <begin position="1"/>
        <end position="113"/>
    </location>
</feature>
<feature type="binding site" evidence="1">
    <location>
        <position position="2"/>
    </location>
    <ligand>
        <name>Ni(2+)</name>
        <dbReference type="ChEBI" id="CHEBI:49786"/>
    </ligand>
</feature>
<feature type="binding site" evidence="1">
    <location>
        <position position="73"/>
    </location>
    <ligand>
        <name>Zn(2+)</name>
        <dbReference type="ChEBI" id="CHEBI:29105"/>
    </ligand>
</feature>
<feature type="binding site" evidence="1">
    <location>
        <position position="76"/>
    </location>
    <ligand>
        <name>Zn(2+)</name>
        <dbReference type="ChEBI" id="CHEBI:29105"/>
    </ligand>
</feature>
<feature type="binding site" evidence="1">
    <location>
        <position position="89"/>
    </location>
    <ligand>
        <name>Zn(2+)</name>
        <dbReference type="ChEBI" id="CHEBI:29105"/>
    </ligand>
</feature>
<feature type="binding site" evidence="1">
    <location>
        <position position="92"/>
    </location>
    <ligand>
        <name>Zn(2+)</name>
        <dbReference type="ChEBI" id="CHEBI:29105"/>
    </ligand>
</feature>
<dbReference type="EMBL" id="AE006470">
    <property type="protein sequence ID" value="AAM73020.1"/>
    <property type="molecule type" value="Genomic_DNA"/>
</dbReference>
<dbReference type="RefSeq" id="NP_662678.1">
    <property type="nucleotide sequence ID" value="NC_002932.3"/>
</dbReference>
<dbReference type="RefSeq" id="WP_010933459.1">
    <property type="nucleotide sequence ID" value="NC_002932.3"/>
</dbReference>
<dbReference type="SMR" id="Q8KBI8"/>
<dbReference type="STRING" id="194439.CT1799"/>
<dbReference type="EnsemblBacteria" id="AAM73020">
    <property type="protein sequence ID" value="AAM73020"/>
    <property type="gene ID" value="CT1799"/>
</dbReference>
<dbReference type="KEGG" id="cte:CT1799"/>
<dbReference type="PATRIC" id="fig|194439.7.peg.1633"/>
<dbReference type="eggNOG" id="COG0375">
    <property type="taxonomic scope" value="Bacteria"/>
</dbReference>
<dbReference type="HOGENOM" id="CLU_126929_0_0_10"/>
<dbReference type="OrthoDB" id="9800361at2"/>
<dbReference type="Proteomes" id="UP000001007">
    <property type="component" value="Chromosome"/>
</dbReference>
<dbReference type="GO" id="GO:0016151">
    <property type="term" value="F:nickel cation binding"/>
    <property type="evidence" value="ECO:0007669"/>
    <property type="project" value="UniProtKB-UniRule"/>
</dbReference>
<dbReference type="GO" id="GO:0008270">
    <property type="term" value="F:zinc ion binding"/>
    <property type="evidence" value="ECO:0007669"/>
    <property type="project" value="UniProtKB-UniRule"/>
</dbReference>
<dbReference type="GO" id="GO:0051604">
    <property type="term" value="P:protein maturation"/>
    <property type="evidence" value="ECO:0007669"/>
    <property type="project" value="InterPro"/>
</dbReference>
<dbReference type="GO" id="GO:0036211">
    <property type="term" value="P:protein modification process"/>
    <property type="evidence" value="ECO:0007669"/>
    <property type="project" value="UniProtKB-UniRule"/>
</dbReference>
<dbReference type="Gene3D" id="3.30.2320.80">
    <property type="match status" value="1"/>
</dbReference>
<dbReference type="HAMAP" id="MF_00213">
    <property type="entry name" value="HypA_HybF"/>
    <property type="match status" value="1"/>
</dbReference>
<dbReference type="InterPro" id="IPR020538">
    <property type="entry name" value="Hydgase_Ni_incorp_HypA/HybF_CS"/>
</dbReference>
<dbReference type="InterPro" id="IPR000688">
    <property type="entry name" value="HypA/HybF"/>
</dbReference>
<dbReference type="NCBIfam" id="TIGR00100">
    <property type="entry name" value="hypA"/>
    <property type="match status" value="1"/>
</dbReference>
<dbReference type="PANTHER" id="PTHR34535">
    <property type="entry name" value="HYDROGENASE MATURATION FACTOR HYPA"/>
    <property type="match status" value="1"/>
</dbReference>
<dbReference type="PANTHER" id="PTHR34535:SF3">
    <property type="entry name" value="HYDROGENASE MATURATION FACTOR HYPA"/>
    <property type="match status" value="1"/>
</dbReference>
<dbReference type="Pfam" id="PF01155">
    <property type="entry name" value="HypA"/>
    <property type="match status" value="1"/>
</dbReference>
<dbReference type="PIRSF" id="PIRSF004761">
    <property type="entry name" value="Hydrgn_mat_HypA"/>
    <property type="match status" value="1"/>
</dbReference>
<dbReference type="PROSITE" id="PS01249">
    <property type="entry name" value="HYPA"/>
    <property type="match status" value="1"/>
</dbReference>
<comment type="function">
    <text evidence="1">Involved in the maturation of [NiFe] hydrogenases. Required for nickel insertion into the metal center of the hydrogenase.</text>
</comment>
<comment type="similarity">
    <text evidence="1">Belongs to the HypA/HybF family.</text>
</comment>
<protein>
    <recommendedName>
        <fullName evidence="1">Hydrogenase maturation factor HypA</fullName>
    </recommendedName>
</protein>
<accession>Q8KBI8</accession>
<gene>
    <name evidence="1" type="primary">hypA</name>
    <name type="synonym">hupA</name>
    <name type="ordered locus">CT1799</name>
</gene>
<proteinExistence type="inferred from homology"/>
<organism>
    <name type="scientific">Chlorobaculum tepidum (strain ATCC 49652 / DSM 12025 / NBRC 103806 / TLS)</name>
    <name type="common">Chlorobium tepidum</name>
    <dbReference type="NCBI Taxonomy" id="194439"/>
    <lineage>
        <taxon>Bacteria</taxon>
        <taxon>Pseudomonadati</taxon>
        <taxon>Chlorobiota</taxon>
        <taxon>Chlorobiia</taxon>
        <taxon>Chlorobiales</taxon>
        <taxon>Chlorobiaceae</taxon>
        <taxon>Chlorobaculum</taxon>
    </lineage>
</organism>
<evidence type="ECO:0000255" key="1">
    <source>
        <dbReference type="HAMAP-Rule" id="MF_00213"/>
    </source>
</evidence>
<sequence length="113" mass="11975">MHEMSIAMSVVEAVVDKAREEGGGKITGIDLVVGRLAGVEVESLKFCFGAAARGTLAEGAELVIEEPEGRGRCEACGAEFPVTSFYAKCSACGQFRVKIESGRELAVRSFTIE</sequence>
<name>HYPA_CHLTE</name>
<keyword id="KW-0479">Metal-binding</keyword>
<keyword id="KW-0533">Nickel</keyword>
<keyword id="KW-1185">Reference proteome</keyword>
<keyword id="KW-0862">Zinc</keyword>
<reference key="1">
    <citation type="journal article" date="2002" name="Proc. Natl. Acad. Sci. U.S.A.">
        <title>The complete genome sequence of Chlorobium tepidum TLS, a photosynthetic, anaerobic, green-sulfur bacterium.</title>
        <authorList>
            <person name="Eisen J.A."/>
            <person name="Nelson K.E."/>
            <person name="Paulsen I.T."/>
            <person name="Heidelberg J.F."/>
            <person name="Wu M."/>
            <person name="Dodson R.J."/>
            <person name="DeBoy R.T."/>
            <person name="Gwinn M.L."/>
            <person name="Nelson W.C."/>
            <person name="Haft D.H."/>
            <person name="Hickey E.K."/>
            <person name="Peterson J.D."/>
            <person name="Durkin A.S."/>
            <person name="Kolonay J.F."/>
            <person name="Yang F."/>
            <person name="Holt I.E."/>
            <person name="Umayam L.A."/>
            <person name="Mason T.M."/>
            <person name="Brenner M."/>
            <person name="Shea T.P."/>
            <person name="Parksey D.S."/>
            <person name="Nierman W.C."/>
            <person name="Feldblyum T.V."/>
            <person name="Hansen C.L."/>
            <person name="Craven M.B."/>
            <person name="Radune D."/>
            <person name="Vamathevan J.J."/>
            <person name="Khouri H.M."/>
            <person name="White O."/>
            <person name="Gruber T.M."/>
            <person name="Ketchum K.A."/>
            <person name="Venter J.C."/>
            <person name="Tettelin H."/>
            <person name="Bryant D.A."/>
            <person name="Fraser C.M."/>
        </authorList>
    </citation>
    <scope>NUCLEOTIDE SEQUENCE [LARGE SCALE GENOMIC DNA]</scope>
    <source>
        <strain>ATCC 49652 / DSM 12025 / NBRC 103806 / TLS</strain>
    </source>
</reference>